<sequence>MPGGRRGPSRQQLSRSALPSLQTLVGGMCGNGTGLRNRNGSAIGLSAPPITALITPEPVRHCHIPELPVDGGLVFEFLFFIYLLVTLFTQYINIYKTVWWYPYNHPASCTSLNFHLIDYHLAAFITVMLARRLVWALISQASQVGTSSVVKYSALIIGRLVLLTLCGWIFCWTTVNLFRNHSVLNLLFLGYPFGVYVPLCCFHQDNRSQPLPTDCGYLVPDSLVHEGANGVGGLVRPKDFLSLLRESLREQFNSPPSIPSHSCPLSPDLIRNEVECLKSDFNRRIKEVLFNSLFSAYYVAFLPLCFVKSTQYYDMRWSCEHLIMVWINAFVMLSTQLLPPKYCDLLHRSASHLGKWQKLEHGSYSNAPQHVWSENTVWPQGVLVRHSRSLYKAVGSYNVAVPSEISHARFYFLFHRPLRLLNLLLVIEGSLVLYQLYSLLRAEKWNHTLSIALILFCNYYVLFKLLRDRIVLGRAYSYPLSSYGLKPH</sequence>
<feature type="chain" id="PRO_0000279229" description="Transmembrane protein 39A-B">
    <location>
        <begin position="1"/>
        <end position="488"/>
    </location>
</feature>
<feature type="transmembrane region" description="Helical" evidence="1">
    <location>
        <begin position="72"/>
        <end position="92"/>
    </location>
</feature>
<feature type="transmembrane region" description="Helical" evidence="1">
    <location>
        <begin position="110"/>
        <end position="130"/>
    </location>
</feature>
<feature type="transmembrane region" description="Helical" evidence="1">
    <location>
        <begin position="155"/>
        <end position="175"/>
    </location>
</feature>
<feature type="transmembrane region" description="Helical" evidence="1">
    <location>
        <begin position="182"/>
        <end position="202"/>
    </location>
</feature>
<feature type="transmembrane region" description="Helical" evidence="1">
    <location>
        <begin position="287"/>
        <end position="307"/>
    </location>
</feature>
<feature type="transmembrane region" description="Helical" evidence="1">
    <location>
        <begin position="319"/>
        <end position="339"/>
    </location>
</feature>
<feature type="transmembrane region" description="Helical" evidence="1">
    <location>
        <begin position="420"/>
        <end position="440"/>
    </location>
</feature>
<feature type="transmembrane region" description="Helical" evidence="1">
    <location>
        <begin position="446"/>
        <end position="466"/>
    </location>
</feature>
<feature type="glycosylation site" description="N-linked (GlcNAc...) asparagine" evidence="1">
    <location>
        <position position="31"/>
    </location>
</feature>
<feature type="glycosylation site" description="N-linked (GlcNAc...) asparagine" evidence="1">
    <location>
        <position position="39"/>
    </location>
</feature>
<feature type="glycosylation site" description="N-linked (GlcNAc...) asparagine" evidence="1">
    <location>
        <position position="180"/>
    </location>
</feature>
<feature type="glycosylation site" description="N-linked (GlcNAc...) asparagine" evidence="1">
    <location>
        <position position="206"/>
    </location>
</feature>
<evidence type="ECO:0000255" key="1"/>
<evidence type="ECO:0000305" key="2"/>
<reference key="1">
    <citation type="submission" date="2004-06" db="EMBL/GenBank/DDBJ databases">
        <authorList>
            <consortium name="NIH - Xenopus Gene Collection (XGC) project"/>
        </authorList>
    </citation>
    <scope>NUCLEOTIDE SEQUENCE [LARGE SCALE MRNA]</scope>
    <source>
        <tissue>Spleen</tissue>
    </source>
</reference>
<organism>
    <name type="scientific">Xenopus laevis</name>
    <name type="common">African clawed frog</name>
    <dbReference type="NCBI Taxonomy" id="8355"/>
    <lineage>
        <taxon>Eukaryota</taxon>
        <taxon>Metazoa</taxon>
        <taxon>Chordata</taxon>
        <taxon>Craniata</taxon>
        <taxon>Vertebrata</taxon>
        <taxon>Euteleostomi</taxon>
        <taxon>Amphibia</taxon>
        <taxon>Batrachia</taxon>
        <taxon>Anura</taxon>
        <taxon>Pipoidea</taxon>
        <taxon>Pipidae</taxon>
        <taxon>Xenopodinae</taxon>
        <taxon>Xenopus</taxon>
        <taxon>Xenopus</taxon>
    </lineage>
</organism>
<gene>
    <name type="primary">tmem39a-b</name>
</gene>
<accession>Q6GNY8</accession>
<name>T39AB_XENLA</name>
<comment type="subcellular location">
    <subcellularLocation>
        <location evidence="2">Membrane</location>
        <topology evidence="2">Multi-pass membrane protein</topology>
    </subcellularLocation>
</comment>
<comment type="similarity">
    <text evidence="2">Belongs to the TMEM39 family.</text>
</comment>
<protein>
    <recommendedName>
        <fullName>Transmembrane protein 39A-B</fullName>
    </recommendedName>
</protein>
<proteinExistence type="evidence at transcript level"/>
<keyword id="KW-0325">Glycoprotein</keyword>
<keyword id="KW-0472">Membrane</keyword>
<keyword id="KW-1185">Reference proteome</keyword>
<keyword id="KW-0812">Transmembrane</keyword>
<keyword id="KW-1133">Transmembrane helix</keyword>
<dbReference type="EMBL" id="BC073362">
    <property type="protein sequence ID" value="AAH73362.1"/>
    <property type="molecule type" value="mRNA"/>
</dbReference>
<dbReference type="RefSeq" id="NP_001085800.1">
    <property type="nucleotide sequence ID" value="NM_001092331.1"/>
</dbReference>
<dbReference type="GlyCosmos" id="Q6GNY8">
    <property type="glycosylation" value="4 sites, No reported glycans"/>
</dbReference>
<dbReference type="DNASU" id="444227"/>
<dbReference type="GeneID" id="444227"/>
<dbReference type="KEGG" id="xla:444227"/>
<dbReference type="AGR" id="Xenbase:XB-GENE-6255703"/>
<dbReference type="CTD" id="444227"/>
<dbReference type="Xenbase" id="XB-GENE-6255703">
    <property type="gene designation" value="tmem39a.L"/>
</dbReference>
<dbReference type="OrthoDB" id="5862608at2759"/>
<dbReference type="Proteomes" id="UP000186698">
    <property type="component" value="Chromosome 2L"/>
</dbReference>
<dbReference type="Bgee" id="444227">
    <property type="expression patterns" value="Expressed in internal ear and 19 other cell types or tissues"/>
</dbReference>
<dbReference type="GO" id="GO:0005789">
    <property type="term" value="C:endoplasmic reticulum membrane"/>
    <property type="evidence" value="ECO:0000318"/>
    <property type="project" value="GO_Central"/>
</dbReference>
<dbReference type="GO" id="GO:1902902">
    <property type="term" value="P:negative regulation of autophagosome assembly"/>
    <property type="evidence" value="ECO:0000318"/>
    <property type="project" value="GO_Central"/>
</dbReference>
<dbReference type="GO" id="GO:1901097">
    <property type="term" value="P:negative regulation of autophagosome maturation"/>
    <property type="evidence" value="ECO:0000318"/>
    <property type="project" value="GO_Central"/>
</dbReference>
<dbReference type="InterPro" id="IPR019397">
    <property type="entry name" value="Uncharacterised_TMEM39"/>
</dbReference>
<dbReference type="PANTHER" id="PTHR12995">
    <property type="entry name" value="FI21814P1"/>
    <property type="match status" value="1"/>
</dbReference>
<dbReference type="PANTHER" id="PTHR12995:SF3">
    <property type="entry name" value="TRANSMEMBRANE PROTEIN 39A"/>
    <property type="match status" value="1"/>
</dbReference>
<dbReference type="Pfam" id="PF10271">
    <property type="entry name" value="Tmp39"/>
    <property type="match status" value="1"/>
</dbReference>